<feature type="chain" id="PRO_0000139092" description="Poly(A) polymerase I">
    <location>
        <begin position="1"/>
        <end position="465"/>
    </location>
</feature>
<feature type="region of interest" description="Disordered" evidence="2">
    <location>
        <begin position="429"/>
        <end position="465"/>
    </location>
</feature>
<feature type="compositionally biased region" description="Basic residues" evidence="2">
    <location>
        <begin position="448"/>
        <end position="459"/>
    </location>
</feature>
<feature type="active site" evidence="1">
    <location>
        <position position="80"/>
    </location>
</feature>
<feature type="active site" evidence="1">
    <location>
        <position position="82"/>
    </location>
</feature>
<feature type="active site" evidence="1">
    <location>
        <position position="162"/>
    </location>
</feature>
<accession>P0ABF2</accession>
<accession>P13685</accession>
<accession>P78050</accession>
<accession>Q8X910</accession>
<comment type="function">
    <text evidence="1">Adds poly(A) tail to the 3' end of many RNAs, which usually targets these RNAs for decay. Plays a significant role in the global control of gene expression, through influencing the rate of transcript degradation, and in the general RNA quality control.</text>
</comment>
<comment type="catalytic activity">
    <reaction evidence="1">
        <text>RNA(n) + ATP = RNA(n)-3'-adenine ribonucleotide + diphosphate</text>
        <dbReference type="Rhea" id="RHEA:11332"/>
        <dbReference type="Rhea" id="RHEA-COMP:14527"/>
        <dbReference type="Rhea" id="RHEA-COMP:17347"/>
        <dbReference type="ChEBI" id="CHEBI:30616"/>
        <dbReference type="ChEBI" id="CHEBI:33019"/>
        <dbReference type="ChEBI" id="CHEBI:140395"/>
        <dbReference type="ChEBI" id="CHEBI:173115"/>
        <dbReference type="EC" id="2.7.7.19"/>
    </reaction>
</comment>
<comment type="similarity">
    <text evidence="1">Belongs to the tRNA nucleotidyltransferase/poly(A) polymerase family.</text>
</comment>
<comment type="sequence caution" evidence="3">
    <conflict type="erroneous initiation">
        <sequence resource="EMBL-CDS" id="AAN78670"/>
    </conflict>
    <text>Extended N-terminus.</text>
</comment>
<evidence type="ECO:0000255" key="1">
    <source>
        <dbReference type="HAMAP-Rule" id="MF_00957"/>
    </source>
</evidence>
<evidence type="ECO:0000256" key="2">
    <source>
        <dbReference type="SAM" id="MobiDB-lite"/>
    </source>
</evidence>
<evidence type="ECO:0000305" key="3"/>
<protein>
    <recommendedName>
        <fullName evidence="1">Poly(A) polymerase I</fullName>
        <shortName evidence="1">PAP I</shortName>
        <ecNumber evidence="1">2.7.7.19</ecNumber>
    </recommendedName>
</protein>
<reference key="1">
    <citation type="journal article" date="2002" name="Proc. Natl. Acad. Sci. U.S.A.">
        <title>Extensive mosaic structure revealed by the complete genome sequence of uropathogenic Escherichia coli.</title>
        <authorList>
            <person name="Welch R.A."/>
            <person name="Burland V."/>
            <person name="Plunkett G. III"/>
            <person name="Redford P."/>
            <person name="Roesch P."/>
            <person name="Rasko D."/>
            <person name="Buckles E.L."/>
            <person name="Liou S.-R."/>
            <person name="Boutin A."/>
            <person name="Hackett J."/>
            <person name="Stroud D."/>
            <person name="Mayhew G.F."/>
            <person name="Rose D.J."/>
            <person name="Zhou S."/>
            <person name="Schwartz D.C."/>
            <person name="Perna N.T."/>
            <person name="Mobley H.L.T."/>
            <person name="Donnenberg M.S."/>
            <person name="Blattner F.R."/>
        </authorList>
    </citation>
    <scope>NUCLEOTIDE SEQUENCE [LARGE SCALE GENOMIC DNA]</scope>
    <source>
        <strain>CFT073 / ATCC 700928 / UPEC</strain>
    </source>
</reference>
<gene>
    <name evidence="1" type="primary">pcnB</name>
    <name type="ordered locus">c0176</name>
</gene>
<sequence>MFTRVANFCRKVLSREESEAEQAVARPQVTVIPREQHAISRKDISENALKVMYRLNKAGYEAWLVGGGVRDLLLGKKPKDFDVTTNATPEQVRKLFRNCRLVGRRFRLAHVMFGPEIIEVATFRGHHEGNVSDRTTSQRGQNGMLLRDNIFGSIEEDAQRRDFTINSLYYSVADFTVRDYVGGMKDLKDGVIRLIGNPETRYREDPVRMLRAVRFAAKLGMRISPETAEPIPRLATLLNDIPPARLFEESLKLLQAGYGYETYKLLCEYHLFQPLFPTITRYFTENGDSPMERIIEQVLKNTDTRIHNDMRVNPAFLFAAMFWYPLLETAQKIAQESGLTYHDAFALAMNDVLDEACRSLAIPKRLTTLTRDIWQLQLRMSRRQGKRAWKLLEHPKFRAAYDLLALRAEVERNAELQRLVKWWGEFQVSAPPDQKGMLNELDEEPSPRRRTRRPRKRAPRREGTA</sequence>
<organism>
    <name type="scientific">Escherichia coli O6:H1 (strain CFT073 / ATCC 700928 / UPEC)</name>
    <dbReference type="NCBI Taxonomy" id="199310"/>
    <lineage>
        <taxon>Bacteria</taxon>
        <taxon>Pseudomonadati</taxon>
        <taxon>Pseudomonadota</taxon>
        <taxon>Gammaproteobacteria</taxon>
        <taxon>Enterobacterales</taxon>
        <taxon>Enterobacteriaceae</taxon>
        <taxon>Escherichia</taxon>
    </lineage>
</organism>
<keyword id="KW-0067">ATP-binding</keyword>
<keyword id="KW-0507">mRNA processing</keyword>
<keyword id="KW-0547">Nucleotide-binding</keyword>
<keyword id="KW-1185">Reference proteome</keyword>
<keyword id="KW-0694">RNA-binding</keyword>
<keyword id="KW-0804">Transcription</keyword>
<keyword id="KW-0808">Transferase</keyword>
<proteinExistence type="inferred from homology"/>
<name>PCNB_ECOL6</name>
<dbReference type="EC" id="2.7.7.19" evidence="1"/>
<dbReference type="EMBL" id="AE014075">
    <property type="protein sequence ID" value="AAN78670.1"/>
    <property type="status" value="ALT_INIT"/>
    <property type="molecule type" value="Genomic_DNA"/>
</dbReference>
<dbReference type="RefSeq" id="WP_010723084.1">
    <property type="nucleotide sequence ID" value="NZ_CP051263.1"/>
</dbReference>
<dbReference type="SMR" id="P0ABF2"/>
<dbReference type="STRING" id="199310.c0176"/>
<dbReference type="GeneID" id="93777284"/>
<dbReference type="KEGG" id="ecc:c0176"/>
<dbReference type="eggNOG" id="COG0617">
    <property type="taxonomic scope" value="Bacteria"/>
</dbReference>
<dbReference type="HOGENOM" id="CLU_015961_0_0_6"/>
<dbReference type="Proteomes" id="UP000001410">
    <property type="component" value="Chromosome"/>
</dbReference>
<dbReference type="GO" id="GO:0005524">
    <property type="term" value="F:ATP binding"/>
    <property type="evidence" value="ECO:0007669"/>
    <property type="project" value="UniProtKB-UniRule"/>
</dbReference>
<dbReference type="GO" id="GO:1990817">
    <property type="term" value="F:poly(A) RNA polymerase activity"/>
    <property type="evidence" value="ECO:0007669"/>
    <property type="project" value="UniProtKB-UniRule"/>
</dbReference>
<dbReference type="GO" id="GO:0003723">
    <property type="term" value="F:RNA binding"/>
    <property type="evidence" value="ECO:0007669"/>
    <property type="project" value="UniProtKB-UniRule"/>
</dbReference>
<dbReference type="GO" id="GO:0006397">
    <property type="term" value="P:mRNA processing"/>
    <property type="evidence" value="ECO:0007669"/>
    <property type="project" value="UniProtKB-KW"/>
</dbReference>
<dbReference type="GO" id="GO:0043633">
    <property type="term" value="P:polyadenylation-dependent RNA catabolic process"/>
    <property type="evidence" value="ECO:0007669"/>
    <property type="project" value="InterPro"/>
</dbReference>
<dbReference type="CDD" id="cd05398">
    <property type="entry name" value="NT_ClassII-CCAase"/>
    <property type="match status" value="1"/>
</dbReference>
<dbReference type="FunFam" id="1.10.3090.10:FF:000003">
    <property type="entry name" value="Poly(A) polymerase I"/>
    <property type="match status" value="1"/>
</dbReference>
<dbReference type="FunFam" id="3.30.460.10:FF:000035">
    <property type="entry name" value="Poly(A) polymerase I"/>
    <property type="match status" value="1"/>
</dbReference>
<dbReference type="Gene3D" id="3.30.460.10">
    <property type="entry name" value="Beta Polymerase, domain 2"/>
    <property type="match status" value="1"/>
</dbReference>
<dbReference type="Gene3D" id="1.10.3090.10">
    <property type="entry name" value="cca-adding enzyme, domain 2"/>
    <property type="match status" value="1"/>
</dbReference>
<dbReference type="HAMAP" id="MF_00957">
    <property type="entry name" value="PolyA_pol"/>
    <property type="match status" value="1"/>
</dbReference>
<dbReference type="InterPro" id="IPR043519">
    <property type="entry name" value="NT_sf"/>
</dbReference>
<dbReference type="InterPro" id="IPR002646">
    <property type="entry name" value="PolA_pol_head_dom"/>
</dbReference>
<dbReference type="InterPro" id="IPR010206">
    <property type="entry name" value="PolA_pol_I"/>
</dbReference>
<dbReference type="InterPro" id="IPR025866">
    <property type="entry name" value="PolyA_pol_arg_C_dom"/>
</dbReference>
<dbReference type="InterPro" id="IPR032828">
    <property type="entry name" value="PolyA_RNA-bd"/>
</dbReference>
<dbReference type="InterPro" id="IPR052191">
    <property type="entry name" value="tRNA_ntf/polyA_polymerase_I"/>
</dbReference>
<dbReference type="NCBIfam" id="TIGR01942">
    <property type="entry name" value="pcnB"/>
    <property type="match status" value="1"/>
</dbReference>
<dbReference type="NCBIfam" id="NF008634">
    <property type="entry name" value="PRK11623.1"/>
    <property type="match status" value="1"/>
</dbReference>
<dbReference type="PANTHER" id="PTHR43051">
    <property type="entry name" value="POLYNUCLEOTIDE ADENYLYLTRANSFERASE FAMILY PROTEIN"/>
    <property type="match status" value="1"/>
</dbReference>
<dbReference type="PANTHER" id="PTHR43051:SF1">
    <property type="entry name" value="POLYNUCLEOTIDE ADENYLYLTRANSFERASE FAMILY PROTEIN"/>
    <property type="match status" value="1"/>
</dbReference>
<dbReference type="Pfam" id="PF01743">
    <property type="entry name" value="PolyA_pol"/>
    <property type="match status" value="1"/>
</dbReference>
<dbReference type="Pfam" id="PF12626">
    <property type="entry name" value="PolyA_pol_arg_C"/>
    <property type="match status" value="1"/>
</dbReference>
<dbReference type="Pfam" id="PF12627">
    <property type="entry name" value="PolyA_pol_RNAbd"/>
    <property type="match status" value="1"/>
</dbReference>
<dbReference type="SUPFAM" id="SSF81301">
    <property type="entry name" value="Nucleotidyltransferase"/>
    <property type="match status" value="1"/>
</dbReference>
<dbReference type="SUPFAM" id="SSF81891">
    <property type="entry name" value="Poly A polymerase C-terminal region-like"/>
    <property type="match status" value="1"/>
</dbReference>